<organism>
    <name type="scientific">Salmonella typhimurium (strain 14028s / SGSC 2262)</name>
    <dbReference type="NCBI Taxonomy" id="588858"/>
    <lineage>
        <taxon>Bacteria</taxon>
        <taxon>Pseudomonadati</taxon>
        <taxon>Pseudomonadota</taxon>
        <taxon>Gammaproteobacteria</taxon>
        <taxon>Enterobacterales</taxon>
        <taxon>Enterobacteriaceae</taxon>
        <taxon>Salmonella</taxon>
    </lineage>
</organism>
<dbReference type="EMBL" id="CP001363">
    <property type="protein sequence ID" value="ACY88183.1"/>
    <property type="molecule type" value="Genomic_DNA"/>
</dbReference>
<dbReference type="RefSeq" id="WP_000862874.1">
    <property type="nucleotide sequence ID" value="NZ_CP043402.1"/>
</dbReference>
<dbReference type="SMR" id="D0ZWT5"/>
<dbReference type="KEGG" id="seo:STM14_1705"/>
<dbReference type="PATRIC" id="fig|588858.6.peg.1639"/>
<dbReference type="HOGENOM" id="CLU_073268_1_0_6"/>
<dbReference type="BioCyc" id="SENT588858:STM14_RS07900-MONOMER"/>
<dbReference type="PHI-base" id="PHI:10139"/>
<dbReference type="Proteomes" id="UP000002695">
    <property type="component" value="Chromosome"/>
</dbReference>
<dbReference type="GO" id="GO:0009279">
    <property type="term" value="C:cell outer membrane"/>
    <property type="evidence" value="ECO:0007669"/>
    <property type="project" value="UniProtKB-SubCell"/>
</dbReference>
<dbReference type="GO" id="GO:0009306">
    <property type="term" value="P:protein secretion"/>
    <property type="evidence" value="ECO:0007669"/>
    <property type="project" value="InterPro"/>
</dbReference>
<dbReference type="Gene3D" id="3.30.300.30">
    <property type="match status" value="1"/>
</dbReference>
<dbReference type="Gene3D" id="3.30.70.1530">
    <property type="entry name" value="Hypothetical protein rpa1041"/>
    <property type="match status" value="1"/>
</dbReference>
<dbReference type="InterPro" id="IPR045851">
    <property type="entry name" value="AMP-bd_C_sf"/>
</dbReference>
<dbReference type="InterPro" id="IPR006182">
    <property type="entry name" value="FliF_N_dom"/>
</dbReference>
<dbReference type="InterPro" id="IPR003282">
    <property type="entry name" value="T3SS_SctJ"/>
</dbReference>
<dbReference type="InterPro" id="IPR043427">
    <property type="entry name" value="YscJ/FliF"/>
</dbReference>
<dbReference type="NCBIfam" id="TIGR02544">
    <property type="entry name" value="III_secr_YscJ"/>
    <property type="match status" value="1"/>
</dbReference>
<dbReference type="NCBIfam" id="NF011875">
    <property type="entry name" value="PRK15348.1"/>
    <property type="match status" value="1"/>
</dbReference>
<dbReference type="PANTHER" id="PTHR30046">
    <property type="entry name" value="FLAGELLAR M-RING PROTEIN"/>
    <property type="match status" value="1"/>
</dbReference>
<dbReference type="PANTHER" id="PTHR30046:SF3">
    <property type="entry name" value="SECRETION SYSTEM APPARATUS LIPOPROTEIN SSAJ"/>
    <property type="match status" value="1"/>
</dbReference>
<dbReference type="Pfam" id="PF01514">
    <property type="entry name" value="YscJ_FliF"/>
    <property type="match status" value="1"/>
</dbReference>
<dbReference type="PRINTS" id="PR01338">
    <property type="entry name" value="TYPE3OMKPROT"/>
</dbReference>
<dbReference type="PROSITE" id="PS51257">
    <property type="entry name" value="PROKAR_LIPOPROTEIN"/>
    <property type="match status" value="1"/>
</dbReference>
<comment type="function">
    <text>Component of Salmonella pathogenicity island 2 (SPI-2) type III secretion system, required for secretion of some type III-secreted effectors including the SpvB exotoxin.</text>
</comment>
<comment type="subcellular location">
    <subcellularLocation>
        <location evidence="4">Cell outer membrane</location>
        <topology evidence="2">Lipid-anchor</topology>
    </subcellularLocation>
</comment>
<comment type="disruption phenotype">
    <text evidence="3">25-fold reduction in cytopathic effects in human monocyte-derived macrophages.</text>
</comment>
<comment type="similarity">
    <text evidence="4">Belongs to the YscJ lipoprotein family.</text>
</comment>
<evidence type="ECO:0000255" key="1"/>
<evidence type="ECO:0000255" key="2">
    <source>
        <dbReference type="PROSITE-ProRule" id="PRU00303"/>
    </source>
</evidence>
<evidence type="ECO:0000269" key="3">
    <source>
    </source>
</evidence>
<evidence type="ECO:0000305" key="4"/>
<accession>D0ZWT5</accession>
<reference key="1">
    <citation type="journal article" date="2010" name="J. Bacteriol.">
        <title>Short-term signatures of evolutionary change in the Salmonella enterica serovar typhimurium 14028 genome.</title>
        <authorList>
            <person name="Jarvik T."/>
            <person name="Smillie C."/>
            <person name="Groisman E.A."/>
            <person name="Ochman H."/>
        </authorList>
    </citation>
    <scope>NUCLEOTIDE SEQUENCE [LARGE SCALE GENOMIC DNA]</scope>
    <source>
        <strain>14028s / SGSC 2262</strain>
    </source>
</reference>
<reference key="2">
    <citation type="journal article" date="2002" name="Infect. Immun.">
        <title>Genetic requirements for Salmonella-induced cytopathology in human monocyte-derived macrophages.</title>
        <authorList>
            <person name="Browne S.H."/>
            <person name="Lesnick M.L."/>
            <person name="Guiney D.G."/>
        </authorList>
    </citation>
    <scope>DISRUPTION PHENOTYPE</scope>
    <source>
        <strain>14028s / SGSC 2262</strain>
    </source>
</reference>
<name>SSAJ_SALT1</name>
<feature type="signal peptide" evidence="2">
    <location>
        <begin position="1"/>
        <end position="18"/>
    </location>
</feature>
<feature type="chain" id="PRO_0000410495" description="Secretion system apparatus lipoprotein SsaJ">
    <location>
        <begin position="19"/>
        <end position="249"/>
    </location>
</feature>
<feature type="transmembrane region" description="Helical" evidence="1">
    <location>
        <begin position="225"/>
        <end position="245"/>
    </location>
</feature>
<feature type="lipid moiety-binding region" description="N-palmitoyl cysteine" evidence="2">
    <location>
        <position position="19"/>
    </location>
</feature>
<feature type="lipid moiety-binding region" description="S-diacylglycerol cysteine" evidence="2">
    <location>
        <position position="19"/>
    </location>
</feature>
<keyword id="KW-0998">Cell outer membrane</keyword>
<keyword id="KW-0449">Lipoprotein</keyword>
<keyword id="KW-0472">Membrane</keyword>
<keyword id="KW-0564">Palmitate</keyword>
<keyword id="KW-0653">Protein transport</keyword>
<keyword id="KW-0732">Signal</keyword>
<keyword id="KW-0812">Transmembrane</keyword>
<keyword id="KW-1133">Transmembrane helix</keyword>
<keyword id="KW-0813">Transport</keyword>
<sequence>MKVHRIVFLTVLTFFLTACDVDLYRSLPEDEANQMLALLMQHHIDAEKKQEEDGVTLRVEQSQFINAVELLRLNGYPHRQFTTADKMFPANQLVVSPQEEQQKINFLKEQRIEGMLSQMEGVINAKVTIALPTYDEGSNASPSSVAVFIKYSPQVNMEAFRVKIKDLIEMSIPGLQYSKISILMQPAEFRMVADVPARQTFWIMDVINANKGKVVKWLMKYPYPLMLSLTGLLLGVGILIGYFCLRRRF</sequence>
<gene>
    <name type="primary">ssaJ</name>
    <name type="ordered locus">STM14_1705</name>
</gene>
<protein>
    <recommendedName>
        <fullName>Secretion system apparatus lipoprotein SsaJ</fullName>
    </recommendedName>
</protein>
<proteinExistence type="inferred from homology"/>